<comment type="function">
    <text evidence="1 5 10">Major secreted subtilisin-like serine endopeptidase (PubMed:25785714). Mediates the degradation of collagen, the major structural protein in the mammalian host. Degrades the nonhelical regions of collagen that function in the cross-linking of the helical components (By similarity). May function as virulence factor involved in epidermal wing necrosis observed in white nose syndrome (WNS) in bats (Probable).</text>
</comment>
<comment type="biophysicochemical properties">
    <phDependence>
        <text evidence="5">Optimum pH is 6 to 8.</text>
    </phDependence>
    <temperatureDependence>
        <text evidence="5">Optimum temperature is 60 degrees Celsius.</text>
    </temperatureDependence>
</comment>
<comment type="subcellular location">
    <subcellularLocation>
        <location evidence="5 6">Secreted</location>
    </subcellularLocation>
</comment>
<comment type="similarity">
    <text evidence="9">Belongs to the peptidase S8 family.</text>
</comment>
<keyword id="KW-0903">Direct protein sequencing</keyword>
<keyword id="KW-0325">Glycoprotein</keyword>
<keyword id="KW-0378">Hydrolase</keyword>
<keyword id="KW-0645">Protease</keyword>
<keyword id="KW-1185">Reference proteome</keyword>
<keyword id="KW-0964">Secreted</keyword>
<keyword id="KW-0720">Serine protease</keyword>
<keyword id="KW-0732">Signal</keyword>
<dbReference type="EC" id="3.4.21.-" evidence="1"/>
<dbReference type="EMBL" id="GL573547">
    <property type="protein sequence ID" value="ELR07576.1"/>
    <property type="molecule type" value="Genomic_DNA"/>
</dbReference>
<dbReference type="RefSeq" id="XP_012746953.1">
    <property type="nucleotide sequence ID" value="XM_012891499.1"/>
</dbReference>
<dbReference type="SMR" id="L8G6I7"/>
<dbReference type="STRING" id="658429.L8G6I7"/>
<dbReference type="GlyCosmos" id="L8G6I7">
    <property type="glycosylation" value="1 site, No reported glycans"/>
</dbReference>
<dbReference type="VEuPathDB" id="FungiDB:GMDG_08491"/>
<dbReference type="HOGENOM" id="CLU_011263_1_4_1"/>
<dbReference type="InParanoid" id="L8G6I7"/>
<dbReference type="OrthoDB" id="11253at34379"/>
<dbReference type="Proteomes" id="UP000011064">
    <property type="component" value="Unassembled WGS sequence"/>
</dbReference>
<dbReference type="GO" id="GO:0005576">
    <property type="term" value="C:extracellular region"/>
    <property type="evidence" value="ECO:0007669"/>
    <property type="project" value="UniProtKB-SubCell"/>
</dbReference>
<dbReference type="GO" id="GO:0004252">
    <property type="term" value="F:serine-type endopeptidase activity"/>
    <property type="evidence" value="ECO:0007669"/>
    <property type="project" value="InterPro"/>
</dbReference>
<dbReference type="GO" id="GO:0006508">
    <property type="term" value="P:proteolysis"/>
    <property type="evidence" value="ECO:0007669"/>
    <property type="project" value="UniProtKB-KW"/>
</dbReference>
<dbReference type="CDD" id="cd04077">
    <property type="entry name" value="Peptidases_S8_PCSK9_ProteinaseK_like"/>
    <property type="match status" value="1"/>
</dbReference>
<dbReference type="FunFam" id="3.40.50.200:FF:000014">
    <property type="entry name" value="Proteinase K"/>
    <property type="match status" value="1"/>
</dbReference>
<dbReference type="Gene3D" id="3.30.70.80">
    <property type="entry name" value="Peptidase S8 propeptide/proteinase inhibitor I9"/>
    <property type="match status" value="1"/>
</dbReference>
<dbReference type="Gene3D" id="3.40.50.200">
    <property type="entry name" value="Peptidase S8/S53 domain"/>
    <property type="match status" value="1"/>
</dbReference>
<dbReference type="InterPro" id="IPR034193">
    <property type="entry name" value="PCSK9_ProteinaseK-like"/>
</dbReference>
<dbReference type="InterPro" id="IPR000209">
    <property type="entry name" value="Peptidase_S8/S53_dom"/>
</dbReference>
<dbReference type="InterPro" id="IPR036852">
    <property type="entry name" value="Peptidase_S8/S53_dom_sf"/>
</dbReference>
<dbReference type="InterPro" id="IPR023827">
    <property type="entry name" value="Peptidase_S8_Asp-AS"/>
</dbReference>
<dbReference type="InterPro" id="IPR022398">
    <property type="entry name" value="Peptidase_S8_His-AS"/>
</dbReference>
<dbReference type="InterPro" id="IPR023828">
    <property type="entry name" value="Peptidase_S8_Ser-AS"/>
</dbReference>
<dbReference type="InterPro" id="IPR050131">
    <property type="entry name" value="Peptidase_S8_subtilisin-like"/>
</dbReference>
<dbReference type="InterPro" id="IPR015500">
    <property type="entry name" value="Peptidase_S8_subtilisin-rel"/>
</dbReference>
<dbReference type="InterPro" id="IPR010259">
    <property type="entry name" value="S8pro/Inhibitor_I9"/>
</dbReference>
<dbReference type="InterPro" id="IPR037045">
    <property type="entry name" value="S8pro/Inhibitor_I9_sf"/>
</dbReference>
<dbReference type="PANTHER" id="PTHR43806:SF11">
    <property type="entry name" value="CEREVISIN-RELATED"/>
    <property type="match status" value="1"/>
</dbReference>
<dbReference type="PANTHER" id="PTHR43806">
    <property type="entry name" value="PEPTIDASE S8"/>
    <property type="match status" value="1"/>
</dbReference>
<dbReference type="Pfam" id="PF05922">
    <property type="entry name" value="Inhibitor_I9"/>
    <property type="match status" value="1"/>
</dbReference>
<dbReference type="Pfam" id="PF00082">
    <property type="entry name" value="Peptidase_S8"/>
    <property type="match status" value="1"/>
</dbReference>
<dbReference type="PRINTS" id="PR00723">
    <property type="entry name" value="SUBTILISIN"/>
</dbReference>
<dbReference type="SUPFAM" id="SSF54897">
    <property type="entry name" value="Protease propeptides/inhibitors"/>
    <property type="match status" value="1"/>
</dbReference>
<dbReference type="SUPFAM" id="SSF52743">
    <property type="entry name" value="Subtilisin-like"/>
    <property type="match status" value="1"/>
</dbReference>
<dbReference type="PROSITE" id="PS51892">
    <property type="entry name" value="SUBTILASE"/>
    <property type="match status" value="1"/>
</dbReference>
<dbReference type="PROSITE" id="PS00136">
    <property type="entry name" value="SUBTILASE_ASP"/>
    <property type="match status" value="1"/>
</dbReference>
<dbReference type="PROSITE" id="PS00137">
    <property type="entry name" value="SUBTILASE_HIS"/>
    <property type="match status" value="1"/>
</dbReference>
<dbReference type="PROSITE" id="PS00138">
    <property type="entry name" value="SUBTILASE_SER"/>
    <property type="match status" value="1"/>
</dbReference>
<accession>L8G6I7</accession>
<gene>
    <name evidence="7" type="primary">SP1</name>
    <name type="ORF">GMDG_08491</name>
</gene>
<evidence type="ECO:0000250" key="1">
    <source>
        <dbReference type="UniProtKB" id="L8FSM5"/>
    </source>
</evidence>
<evidence type="ECO:0000255" key="2"/>
<evidence type="ECO:0000255" key="3">
    <source>
        <dbReference type="PROSITE-ProRule" id="PRU00498"/>
    </source>
</evidence>
<evidence type="ECO:0000255" key="4">
    <source>
        <dbReference type="PROSITE-ProRule" id="PRU01240"/>
    </source>
</evidence>
<evidence type="ECO:0000269" key="5">
    <source>
    </source>
</evidence>
<evidence type="ECO:0000269" key="6">
    <source>
    </source>
</evidence>
<evidence type="ECO:0000303" key="7">
    <source>
    </source>
</evidence>
<evidence type="ECO:0000303" key="8">
    <source>
    </source>
</evidence>
<evidence type="ECO:0000305" key="9"/>
<evidence type="ECO:0000305" key="10">
    <source>
    </source>
</evidence>
<feature type="signal peptide" evidence="2">
    <location>
        <begin position="1"/>
        <end position="20"/>
    </location>
</feature>
<feature type="propeptide" id="PRO_0000434136" evidence="10">
    <location>
        <begin position="21"/>
        <end position="119"/>
    </location>
</feature>
<feature type="chain" id="PRO_0000434137" description="Subtilisin-like protease 1">
    <location>
        <begin position="120"/>
        <end position="400"/>
    </location>
</feature>
<feature type="domain" description="Inhibitor I9" evidence="2">
    <location>
        <begin position="42"/>
        <end position="117"/>
    </location>
</feature>
<feature type="domain" description="Peptidase S8" evidence="4">
    <location>
        <begin position="128"/>
        <end position="400"/>
    </location>
</feature>
<feature type="active site" description="Charge relay system" evidence="4">
    <location>
        <position position="160"/>
    </location>
</feature>
<feature type="active site" description="Charge relay system" evidence="4">
    <location>
        <position position="192"/>
    </location>
</feature>
<feature type="active site" description="Charge relay system" evidence="4">
    <location>
        <position position="345"/>
    </location>
</feature>
<feature type="site" description="Cleavage; by autocatalysis" evidence="1">
    <location>
        <begin position="119"/>
        <end position="120"/>
    </location>
</feature>
<feature type="glycosylation site" description="N-linked (GlcNAc...) asparagine" evidence="3">
    <location>
        <position position="82"/>
    </location>
</feature>
<reference key="1">
    <citation type="submission" date="2010-09" db="EMBL/GenBank/DDBJ databases">
        <title>The genome sequence of Geomyces destructans 20631-21.</title>
        <authorList>
            <consortium name="The Broad Institute Genome Sequencing Platform"/>
            <person name="Cuomo C.A."/>
            <person name="Blehert D.S."/>
            <person name="Lorch J.M."/>
            <person name="Young S.K."/>
            <person name="Zeng Q."/>
            <person name="Gargeya S."/>
            <person name="Fitzgerald M."/>
            <person name="Haas B."/>
            <person name="Abouelleil A."/>
            <person name="Alvarado L."/>
            <person name="Arachchi H.M."/>
            <person name="Berlin A."/>
            <person name="Brown A."/>
            <person name="Chapman S.B."/>
            <person name="Chen Z."/>
            <person name="Dunbar C."/>
            <person name="Freedman E."/>
            <person name="Gearin G."/>
            <person name="Gellesch M."/>
            <person name="Goldberg J."/>
            <person name="Griggs A."/>
            <person name="Gujja S."/>
            <person name="Heiman D."/>
            <person name="Howarth C."/>
            <person name="Larson L."/>
            <person name="Lui A."/>
            <person name="MacDonald P.J.P."/>
            <person name="Montmayeur A."/>
            <person name="Murphy C."/>
            <person name="Neiman D."/>
            <person name="Pearson M."/>
            <person name="Priest M."/>
            <person name="Roberts A."/>
            <person name="Saif S."/>
            <person name="Shea T."/>
            <person name="Shenoy N."/>
            <person name="Sisk P."/>
            <person name="Stolte C."/>
            <person name="Sykes S."/>
            <person name="Wortman J."/>
            <person name="Nusbaum C."/>
            <person name="Birren B."/>
        </authorList>
    </citation>
    <scope>NUCLEOTIDE SEQUENCE [LARGE SCALE GENOMIC DNA]</scope>
    <source>
        <strain>ATCC MYA-4855 / 20631-21</strain>
    </source>
</reference>
<reference key="2">
    <citation type="journal article" date="2015" name="PLoS ONE">
        <title>Isolation and identification of an extracellular subtilisin-like serine protease secreted by the bat pathogen Pseudogymnoascus destructans.</title>
        <authorList>
            <person name="Pannkuk E.L."/>
            <person name="Risch T.S."/>
            <person name="Savary B.J."/>
        </authorList>
    </citation>
    <scope>PROTEIN SEQUENCE OF 120-128</scope>
    <scope>FUNCTION</scope>
    <scope>BIOPHYSICOCHEMICAL PROPERTIES</scope>
    <scope>SUBCELLULAR LOCATION</scope>
    <scope>IDENTIFICATION BY MASS SPECTROMETRY</scope>
</reference>
<reference key="3">
    <citation type="journal article" date="2015" name="Proc. Natl. Acad. Sci. U.S.A.">
        <title>Destructin-1 is a collagen-degrading endopeptidase secreted by Pseudogymnoascus destructans, the causative agent of white-nose syndrome.</title>
        <authorList>
            <person name="O'Donoghue A.J."/>
            <person name="Knudsen G.M."/>
            <person name="Beekman C."/>
            <person name="Perry J.A."/>
            <person name="Johnson A.D."/>
            <person name="DeRisi J.L."/>
            <person name="Craik C.S."/>
            <person name="Bennett R.J."/>
        </authorList>
    </citation>
    <scope>SUBCELLULAR LOCATION</scope>
    <scope>IDENTIFICATION BY MASS SPECTROMETRY</scope>
</reference>
<reference key="4">
    <citation type="journal article" date="2015" name="Proc. Natl. Acad. Sci. U.S.A.">
        <authorList>
            <person name="O'Donoghue A.J."/>
            <person name="Knudsen G.M."/>
            <person name="Beekman C."/>
            <person name="Perry J.A."/>
            <person name="Johnson A.D."/>
            <person name="DeRisi J.L."/>
            <person name="Craik C.S."/>
            <person name="Bennett R.J."/>
        </authorList>
    </citation>
    <scope>ERRATUM OF PUBMED:25944934</scope>
</reference>
<proteinExistence type="evidence at protein level"/>
<name>SUB1_PSED2</name>
<organism>
    <name type="scientific">Pseudogymnoascus destructans (strain ATCC MYA-4855 / 20631-21)</name>
    <name type="common">Bat white-nose syndrome fungus</name>
    <name type="synonym">Geomyces destructans</name>
    <dbReference type="NCBI Taxonomy" id="658429"/>
    <lineage>
        <taxon>Eukaryota</taxon>
        <taxon>Fungi</taxon>
        <taxon>Dikarya</taxon>
        <taxon>Ascomycota</taxon>
        <taxon>Pezizomycotina</taxon>
        <taxon>Leotiomycetes</taxon>
        <taxon>Thelebolales</taxon>
        <taxon>Thelebolaceae</taxon>
        <taxon>Pseudogymnoascus</taxon>
    </lineage>
</organism>
<sequence>MKFSQSLIALAACFLPLIAAAPVEAQHAKIRSPRAQDIIPDSYIVVFNKGVNDADIESEFSSVSRILSKRRSAHKGVGHKYNITGFKGYQIETDTGSIGEIAASPLVAWIEMDGKVQANALETRSGATWGLGRISHKATGSNSYIYDGSAGSGSTVYVLDTGIYIEHSEFEGRAKWGANYISGSPDTDENGHGTHCAGTIAGATYGVASKANLVAVKVLDRDGFGATSATIAGINFVGQNGKDGKSVISMSLRGHYSAAVNSAVESTVSNGVTIVVAAGNDGDDASNYSPASAKNAITVGSVDSTDTRASSSNYGSVVDIFAPGVNVKSASIGGKSAFSIKSGTSMATPHVAGLAAYLIGLGGLSSPAAIASKIASIGTKGSVKDPKGSVNLIAYNGNGA</sequence>
<protein>
    <recommendedName>
        <fullName evidence="9">Subtilisin-like protease 1</fullName>
        <ecNumber evidence="1">3.4.21.-</ecNumber>
    </recommendedName>
    <alternativeName>
        <fullName evidence="8">Destructin-2</fullName>
    </alternativeName>
    <alternativeName>
        <fullName evidence="7">Serine protease 1</fullName>
        <shortName evidence="7">PdSP1</shortName>
    </alternativeName>
</protein>